<gene>
    <name type="primary">Serpini1</name>
    <name type="synonym">Pi12</name>
    <name type="synonym">Spi17</name>
</gene>
<name>NEUS_RAT</name>
<proteinExistence type="evidence at protein level"/>
<evidence type="ECO:0000250" key="1">
    <source>
        <dbReference type="UniProtKB" id="Q99574"/>
    </source>
</evidence>
<evidence type="ECO:0000255" key="2"/>
<evidence type="ECO:0000269" key="3">
    <source>
    </source>
</evidence>
<evidence type="ECO:0000305" key="4"/>
<evidence type="ECO:0000305" key="5">
    <source>
    </source>
</evidence>
<evidence type="ECO:0007744" key="6">
    <source>
    </source>
</evidence>
<reference key="1">
    <citation type="journal article" date="2000" name="Biochem. J.">
        <title>Neuroserpin is expressed in the pituitary and adrenal glands and induces the extension of neurite-like processes in AtT-20 cells.</title>
        <authorList>
            <person name="Hill R.M."/>
            <person name="Parmar P.K."/>
            <person name="Coates L.C."/>
            <person name="Mezey E."/>
            <person name="Pearson J.F."/>
            <person name="Birch N.P."/>
        </authorList>
    </citation>
    <scope>NUCLEOTIDE SEQUENCE [MRNA]</scope>
    <scope>SUBCELLULAR LOCATION</scope>
    <scope>TISSUE SPECIFICITY</scope>
    <scope>FUNCTION</scope>
    <source>
        <tissue>Pituitary</tissue>
    </source>
</reference>
<reference key="2">
    <citation type="journal article" date="2004" name="Genome Res.">
        <title>The status, quality, and expansion of the NIH full-length cDNA project: the Mammalian Gene Collection (MGC).</title>
        <authorList>
            <consortium name="The MGC Project Team"/>
        </authorList>
    </citation>
    <scope>NUCLEOTIDE SEQUENCE [LARGE SCALE MRNA]</scope>
    <source>
        <tissue>Pituitary</tissue>
    </source>
</reference>
<reference key="3">
    <citation type="journal article" date="2012" name="Nat. Commun.">
        <title>Quantitative maps of protein phosphorylation sites across 14 different rat organs and tissues.</title>
        <authorList>
            <person name="Lundby A."/>
            <person name="Secher A."/>
            <person name="Lage K."/>
            <person name="Nordsborg N.B."/>
            <person name="Dmytriyev A."/>
            <person name="Lundby C."/>
            <person name="Olsen J.V."/>
        </authorList>
    </citation>
    <scope>PHOSPHORYLATION [LARGE SCALE ANALYSIS] AT SER-83</scope>
    <scope>IDENTIFICATION BY MASS SPECTROMETRY [LARGE SCALE ANALYSIS]</scope>
</reference>
<protein>
    <recommendedName>
        <fullName>Neuroserpin</fullName>
    </recommendedName>
    <alternativeName>
        <fullName>Peptidase inhibitor 12</fullName>
        <shortName>PI-12</shortName>
    </alternativeName>
    <alternativeName>
        <fullName>Serine protease inhibitor 17</fullName>
    </alternativeName>
    <alternativeName>
        <fullName>Serpin I1</fullName>
    </alternativeName>
</protein>
<feature type="signal peptide" evidence="2">
    <location>
        <begin position="1"/>
        <end position="16"/>
    </location>
</feature>
<feature type="chain" id="PRO_0000032523" description="Neuroserpin">
    <location>
        <begin position="17"/>
        <end position="410"/>
    </location>
</feature>
<feature type="site" description="Reactive bond" evidence="1">
    <location>
        <begin position="362"/>
        <end position="363"/>
    </location>
</feature>
<feature type="modified residue" description="Phosphoserine" evidence="6">
    <location>
        <position position="83"/>
    </location>
</feature>
<feature type="glycosylation site" description="N-linked (GlcNAc...) asparagine" evidence="2">
    <location>
        <position position="157"/>
    </location>
</feature>
<feature type="glycosylation site" description="N-linked (GlcNAc...) asparagine" evidence="2">
    <location>
        <position position="321"/>
    </location>
</feature>
<feature type="glycosylation site" description="N-linked (GlcNAc...) asparagine" evidence="2">
    <location>
        <position position="401"/>
    </location>
</feature>
<feature type="glycosylation site" description="O-linked (Xyl...) (chondroitin sulfate) serine" evidence="1">
    <location>
        <position position="403"/>
    </location>
</feature>
<feature type="sequence conflict" description="In Ref. 1; AAF70387." evidence="4" ref="1">
    <original>L</original>
    <variation>M</variation>
    <location>
        <position position="12"/>
    </location>
</feature>
<feature type="sequence conflict" description="In Ref. 1; AAF70387." evidence="4" ref="1">
    <original>H</original>
    <variation>Q</variation>
    <location>
        <position position="177"/>
    </location>
</feature>
<accession>Q9JLD2</accession>
<accession>Q9JLD1</accession>
<sequence length="410" mass="46278">MAYLGLLSLVALQSLVTGAAFPDETIAEWSVNVYNHLRATGEDENILFSPLSIALAMGVMELGAQGSTLKEIRHSMGYESLKSGEEFSFLRDFSSMVSAEEGQYVMKIANSLFVQNGFHINEEFLQMMKMYFNAEVNHVDFSENVAVANYINKWVENYTNSLLKDLVSPGDFDAVTHLALINAVYFKGNWKSQFRPENTRTFSFTKDDESEVQIPMMYQQGEFYYGEFSDGSNEAGGIYQVLEIPYEGDEISMMLVLSRQEVPLATLEPLLKPQLIEEWANSVKKQKVEVYLPRFTVEQEIDLKDILKALGVTEIFIKDANLTAMSDKKELFLSKAVHKSFIEVNEEGSEAAVASGMIAISRMAVLFPQVIVDHPFLFLIKNRKTGTILFMGRVMHPETMNTSGHDFEEL</sequence>
<keyword id="KW-0968">Cytoplasmic vesicle</keyword>
<keyword id="KW-0325">Glycoprotein</keyword>
<keyword id="KW-0597">Phosphoprotein</keyword>
<keyword id="KW-0646">Protease inhibitor</keyword>
<keyword id="KW-0654">Proteoglycan</keyword>
<keyword id="KW-1185">Reference proteome</keyword>
<keyword id="KW-0964">Secreted</keyword>
<keyword id="KW-0722">Serine protease inhibitor</keyword>
<keyword id="KW-0732">Signal</keyword>
<comment type="function">
    <text evidence="5">Serine protease inhibitor that inhibits plasminogen activators and plasmin but not thrombin. May be involved in the formation or reorganization of synaptic connections as well as for synaptic plasticity in the adult nervous system. May protect neurons from cell damage by tissue-type plasminogen activator.</text>
</comment>
<comment type="subcellular location">
    <subcellularLocation>
        <location evidence="3">Secreted</location>
    </subcellularLocation>
    <subcellularLocation>
        <location evidence="1">Cytoplasmic vesicle</location>
        <location evidence="1">Secretory vesicle lumen</location>
    </subcellularLocation>
    <subcellularLocation>
        <location evidence="1">Perikaryon</location>
    </subcellularLocation>
</comment>
<comment type="tissue specificity">
    <text evidence="3">Detected in adult pituitary and adrenal gland.</text>
</comment>
<comment type="similarity">
    <text evidence="4">Belongs to the serpin family.</text>
</comment>
<dbReference type="EMBL" id="AF193014">
    <property type="protein sequence ID" value="AAF70386.1"/>
    <property type="molecule type" value="mRNA"/>
</dbReference>
<dbReference type="EMBL" id="AF193015">
    <property type="protein sequence ID" value="AAF70387.1"/>
    <property type="molecule type" value="mRNA"/>
</dbReference>
<dbReference type="EMBL" id="BC061536">
    <property type="protein sequence ID" value="AAH61536.1"/>
    <property type="molecule type" value="mRNA"/>
</dbReference>
<dbReference type="RefSeq" id="NP_446231.1">
    <property type="nucleotide sequence ID" value="NM_053779.2"/>
</dbReference>
<dbReference type="RefSeq" id="XP_008759298.1">
    <property type="nucleotide sequence ID" value="XM_008761076.4"/>
</dbReference>
<dbReference type="RefSeq" id="XP_063137223.1">
    <property type="nucleotide sequence ID" value="XM_063281153.1"/>
</dbReference>
<dbReference type="SMR" id="Q9JLD2"/>
<dbReference type="FunCoup" id="Q9JLD2">
    <property type="interactions" value="835"/>
</dbReference>
<dbReference type="STRING" id="10116.ENSRNOP00000013905"/>
<dbReference type="MEROPS" id="I04.025"/>
<dbReference type="GlyCosmos" id="Q9JLD2">
    <property type="glycosylation" value="3 sites, No reported glycans"/>
</dbReference>
<dbReference type="GlyGen" id="Q9JLD2">
    <property type="glycosylation" value="4 sites"/>
</dbReference>
<dbReference type="iPTMnet" id="Q9JLD2"/>
<dbReference type="PhosphoSitePlus" id="Q9JLD2"/>
<dbReference type="PaxDb" id="10116-ENSRNOP00000013905"/>
<dbReference type="Ensembl" id="ENSRNOT00000013904.7">
    <property type="protein sequence ID" value="ENSRNOP00000013905.4"/>
    <property type="gene ID" value="ENSRNOG00000010248.7"/>
</dbReference>
<dbReference type="GeneID" id="116459"/>
<dbReference type="KEGG" id="rno:116459"/>
<dbReference type="UCSC" id="RGD:619896">
    <property type="organism name" value="rat"/>
</dbReference>
<dbReference type="AGR" id="RGD:619896"/>
<dbReference type="CTD" id="5274"/>
<dbReference type="RGD" id="619896">
    <property type="gene designation" value="Serpini1"/>
</dbReference>
<dbReference type="eggNOG" id="KOG2392">
    <property type="taxonomic scope" value="Eukaryota"/>
</dbReference>
<dbReference type="GeneTree" id="ENSGT00940000158168"/>
<dbReference type="HOGENOM" id="CLU_023330_0_4_1"/>
<dbReference type="InParanoid" id="Q9JLD2"/>
<dbReference type="OMA" id="IQNGFHV"/>
<dbReference type="OrthoDB" id="9518664at2759"/>
<dbReference type="PhylomeDB" id="Q9JLD2"/>
<dbReference type="TreeFam" id="TF352620"/>
<dbReference type="PRO" id="PR:Q9JLD2"/>
<dbReference type="Proteomes" id="UP000002494">
    <property type="component" value="Chromosome 2"/>
</dbReference>
<dbReference type="Bgee" id="ENSRNOG00000010248">
    <property type="expression patterns" value="Expressed in Ammon's horn and 15 other cell types or tissues"/>
</dbReference>
<dbReference type="GO" id="GO:0060205">
    <property type="term" value="C:cytoplasmic vesicle lumen"/>
    <property type="evidence" value="ECO:0000250"/>
    <property type="project" value="UniProtKB"/>
</dbReference>
<dbReference type="GO" id="GO:0005615">
    <property type="term" value="C:extracellular space"/>
    <property type="evidence" value="ECO:0000250"/>
    <property type="project" value="UniProtKB"/>
</dbReference>
<dbReference type="GO" id="GO:0043025">
    <property type="term" value="C:neuronal cell body"/>
    <property type="evidence" value="ECO:0000250"/>
    <property type="project" value="UniProtKB"/>
</dbReference>
<dbReference type="GO" id="GO:0043204">
    <property type="term" value="C:perikaryon"/>
    <property type="evidence" value="ECO:0007669"/>
    <property type="project" value="UniProtKB-SubCell"/>
</dbReference>
<dbReference type="GO" id="GO:0034774">
    <property type="term" value="C:secretory granule lumen"/>
    <property type="evidence" value="ECO:0000266"/>
    <property type="project" value="RGD"/>
</dbReference>
<dbReference type="GO" id="GO:0004867">
    <property type="term" value="F:serine-type endopeptidase inhibitor activity"/>
    <property type="evidence" value="ECO:0000314"/>
    <property type="project" value="RGD"/>
</dbReference>
<dbReference type="GO" id="GO:0010976">
    <property type="term" value="P:positive regulation of neuron projection development"/>
    <property type="evidence" value="ECO:0000314"/>
    <property type="project" value="ParkinsonsUK-UCL"/>
</dbReference>
<dbReference type="CDD" id="cd02048">
    <property type="entry name" value="serpinI1_NSP"/>
    <property type="match status" value="1"/>
</dbReference>
<dbReference type="FunFam" id="3.30.497.10:FF:000005">
    <property type="entry name" value="serpin I2 isoform X1"/>
    <property type="match status" value="1"/>
</dbReference>
<dbReference type="Gene3D" id="2.30.39.10">
    <property type="entry name" value="Alpha-1-antitrypsin, domain 1"/>
    <property type="match status" value="1"/>
</dbReference>
<dbReference type="Gene3D" id="3.30.497.10">
    <property type="entry name" value="Antithrombin, subunit I, domain 2"/>
    <property type="match status" value="1"/>
</dbReference>
<dbReference type="InterPro" id="IPR023795">
    <property type="entry name" value="Serpin_CS"/>
</dbReference>
<dbReference type="InterPro" id="IPR023796">
    <property type="entry name" value="Serpin_dom"/>
</dbReference>
<dbReference type="InterPro" id="IPR000215">
    <property type="entry name" value="Serpin_fam"/>
</dbReference>
<dbReference type="InterPro" id="IPR036186">
    <property type="entry name" value="Serpin_sf"/>
</dbReference>
<dbReference type="InterPro" id="IPR042178">
    <property type="entry name" value="Serpin_sf_1"/>
</dbReference>
<dbReference type="InterPro" id="IPR042185">
    <property type="entry name" value="Serpin_sf_2"/>
</dbReference>
<dbReference type="PANTHER" id="PTHR11461:SF50">
    <property type="entry name" value="NEUROSERPIN"/>
    <property type="match status" value="1"/>
</dbReference>
<dbReference type="PANTHER" id="PTHR11461">
    <property type="entry name" value="SERINE PROTEASE INHIBITOR, SERPIN"/>
    <property type="match status" value="1"/>
</dbReference>
<dbReference type="Pfam" id="PF00079">
    <property type="entry name" value="Serpin"/>
    <property type="match status" value="1"/>
</dbReference>
<dbReference type="SMART" id="SM00093">
    <property type="entry name" value="SERPIN"/>
    <property type="match status" value="1"/>
</dbReference>
<dbReference type="SUPFAM" id="SSF56574">
    <property type="entry name" value="Serpins"/>
    <property type="match status" value="1"/>
</dbReference>
<dbReference type="PROSITE" id="PS00284">
    <property type="entry name" value="SERPIN"/>
    <property type="match status" value="1"/>
</dbReference>
<organism>
    <name type="scientific">Rattus norvegicus</name>
    <name type="common">Rat</name>
    <dbReference type="NCBI Taxonomy" id="10116"/>
    <lineage>
        <taxon>Eukaryota</taxon>
        <taxon>Metazoa</taxon>
        <taxon>Chordata</taxon>
        <taxon>Craniata</taxon>
        <taxon>Vertebrata</taxon>
        <taxon>Euteleostomi</taxon>
        <taxon>Mammalia</taxon>
        <taxon>Eutheria</taxon>
        <taxon>Euarchontoglires</taxon>
        <taxon>Glires</taxon>
        <taxon>Rodentia</taxon>
        <taxon>Myomorpha</taxon>
        <taxon>Muroidea</taxon>
        <taxon>Muridae</taxon>
        <taxon>Murinae</taxon>
        <taxon>Rattus</taxon>
    </lineage>
</organism>